<protein>
    <recommendedName>
        <fullName evidence="1">Global transcriptional regulator CodY</fullName>
    </recommendedName>
</protein>
<comment type="function">
    <text evidence="1">DNA-binding global transcriptional regulator which is involved in the adaptive response to starvation and acts by directly or indirectly controlling the expression of numerous genes in response to nutrient availability. During rapid exponential growth, CodY is highly active and represses genes whose products allow adaptation to nutrient depletion.</text>
</comment>
<comment type="subcellular location">
    <subcellularLocation>
        <location evidence="1">Cytoplasm</location>
    </subcellularLocation>
</comment>
<comment type="similarity">
    <text evidence="1">Belongs to the CodY family.</text>
</comment>
<dbReference type="EMBL" id="CP000920">
    <property type="protein sequence ID" value="ACO21476.1"/>
    <property type="molecule type" value="Genomic_DNA"/>
</dbReference>
<dbReference type="RefSeq" id="WP_000940733.1">
    <property type="nucleotide sequence ID" value="NC_012467.1"/>
</dbReference>
<dbReference type="SMR" id="C1CLT1"/>
<dbReference type="GeneID" id="45653181"/>
<dbReference type="KEGG" id="spp:SPP_1606"/>
<dbReference type="HOGENOM" id="CLU_089581_0_0_9"/>
<dbReference type="GO" id="GO:0005737">
    <property type="term" value="C:cytoplasm"/>
    <property type="evidence" value="ECO:0007669"/>
    <property type="project" value="UniProtKB-SubCell"/>
</dbReference>
<dbReference type="GO" id="GO:0003677">
    <property type="term" value="F:DNA binding"/>
    <property type="evidence" value="ECO:0007669"/>
    <property type="project" value="UniProtKB-UniRule"/>
</dbReference>
<dbReference type="GO" id="GO:0003700">
    <property type="term" value="F:DNA-binding transcription factor activity"/>
    <property type="evidence" value="ECO:0007669"/>
    <property type="project" value="InterPro"/>
</dbReference>
<dbReference type="GO" id="GO:0005525">
    <property type="term" value="F:GTP binding"/>
    <property type="evidence" value="ECO:0007669"/>
    <property type="project" value="InterPro"/>
</dbReference>
<dbReference type="GO" id="GO:0045892">
    <property type="term" value="P:negative regulation of DNA-templated transcription"/>
    <property type="evidence" value="ECO:0007669"/>
    <property type="project" value="UniProtKB-UniRule"/>
</dbReference>
<dbReference type="CDD" id="cd00090">
    <property type="entry name" value="HTH_ARSR"/>
    <property type="match status" value="1"/>
</dbReference>
<dbReference type="FunFam" id="1.10.10.10:FF:000034">
    <property type="entry name" value="GTP-sensing transcriptional pleiotropic repressor CodY"/>
    <property type="match status" value="1"/>
</dbReference>
<dbReference type="FunFam" id="3.30.450.40:FF:000003">
    <property type="entry name" value="GTP-sensing transcriptional pleiotropic repressor CodY"/>
    <property type="match status" value="1"/>
</dbReference>
<dbReference type="Gene3D" id="3.30.450.40">
    <property type="match status" value="1"/>
</dbReference>
<dbReference type="Gene3D" id="1.10.10.10">
    <property type="entry name" value="Winged helix-like DNA-binding domain superfamily/Winged helix DNA-binding domain"/>
    <property type="match status" value="1"/>
</dbReference>
<dbReference type="HAMAP" id="MF_00621">
    <property type="entry name" value="HTH_type_CodY"/>
    <property type="match status" value="1"/>
</dbReference>
<dbReference type="InterPro" id="IPR011991">
    <property type="entry name" value="ArsR-like_HTH"/>
</dbReference>
<dbReference type="InterPro" id="IPR014154">
    <property type="entry name" value="CodY"/>
</dbReference>
<dbReference type="InterPro" id="IPR029016">
    <property type="entry name" value="GAF-like_dom_sf"/>
</dbReference>
<dbReference type="InterPro" id="IPR013198">
    <property type="entry name" value="GTP_trans_reg_CodY_C"/>
</dbReference>
<dbReference type="InterPro" id="IPR010312">
    <property type="entry name" value="Transc_reg_CodY_N"/>
</dbReference>
<dbReference type="InterPro" id="IPR036388">
    <property type="entry name" value="WH-like_DNA-bd_sf"/>
</dbReference>
<dbReference type="InterPro" id="IPR036390">
    <property type="entry name" value="WH_DNA-bd_sf"/>
</dbReference>
<dbReference type="NCBIfam" id="TIGR02787">
    <property type="entry name" value="codY_Gpos"/>
    <property type="match status" value="1"/>
</dbReference>
<dbReference type="NCBIfam" id="NF003170">
    <property type="entry name" value="PRK04158.1"/>
    <property type="match status" value="1"/>
</dbReference>
<dbReference type="PANTHER" id="PTHR40062:SF1">
    <property type="entry name" value="GLOBAL TRANSCRIPTIONAL REGULATOR CODY"/>
    <property type="match status" value="1"/>
</dbReference>
<dbReference type="PANTHER" id="PTHR40062">
    <property type="entry name" value="GTP-SENSING TRANSCRIPTIONAL PLEIOTROPIC REPRESSOR CODY"/>
    <property type="match status" value="1"/>
</dbReference>
<dbReference type="Pfam" id="PF06018">
    <property type="entry name" value="CodY"/>
    <property type="match status" value="1"/>
</dbReference>
<dbReference type="Pfam" id="PF08222">
    <property type="entry name" value="HTH_CodY"/>
    <property type="match status" value="1"/>
</dbReference>
<dbReference type="PIRSF" id="PIRSF011572">
    <property type="entry name" value="GTP_sensing_CodY"/>
    <property type="match status" value="1"/>
</dbReference>
<dbReference type="SUPFAM" id="SSF46785">
    <property type="entry name" value="Winged helix' DNA-binding domain"/>
    <property type="match status" value="1"/>
</dbReference>
<organism>
    <name type="scientific">Streptococcus pneumoniae (strain P1031)</name>
    <dbReference type="NCBI Taxonomy" id="488223"/>
    <lineage>
        <taxon>Bacteria</taxon>
        <taxon>Bacillati</taxon>
        <taxon>Bacillota</taxon>
        <taxon>Bacilli</taxon>
        <taxon>Lactobacillales</taxon>
        <taxon>Streptococcaceae</taxon>
        <taxon>Streptococcus</taxon>
    </lineage>
</organism>
<accession>C1CLT1</accession>
<keyword id="KW-0963">Cytoplasm</keyword>
<keyword id="KW-0238">DNA-binding</keyword>
<keyword id="KW-0678">Repressor</keyword>
<keyword id="KW-0804">Transcription</keyword>
<keyword id="KW-0805">Transcription regulation</keyword>
<evidence type="ECO:0000255" key="1">
    <source>
        <dbReference type="HAMAP-Rule" id="MF_00621"/>
    </source>
</evidence>
<feature type="chain" id="PRO_1000147213" description="Global transcriptional regulator CodY">
    <location>
        <begin position="1"/>
        <end position="262"/>
    </location>
</feature>
<feature type="DNA-binding region" description="H-T-H motif" evidence="1">
    <location>
        <begin position="207"/>
        <end position="226"/>
    </location>
</feature>
<feature type="region of interest" description="GAF domain" evidence="1">
    <location>
        <begin position="1"/>
        <end position="159"/>
    </location>
</feature>
<gene>
    <name evidence="1" type="primary">codY</name>
    <name type="ordered locus">SPP_1606</name>
</gene>
<proteinExistence type="inferred from homology"/>
<sequence>MAHLLEKTRKITSILKRSEEQLQDELPYNAITRQLADIIHCNACIINSKGRLLGYFMRYKTNTDRVEQFFQTKIFPDDYVQGANMIYETEANLPVEHDMSIFPVESRDDFPDGLTTIAPIHVSGIRLGSLIIWRNDKKFEDEDLVLVEIASTVVGIQLLNFQREEDEKNIRRRTAVTMAVNTLSYSELRAVSAILGELNGNEGKLTASVIADRIGITRSVIVNALRKLESAGIIESRSLGMKGTYLKVLISDIFEEVKKRDY</sequence>
<reference key="1">
    <citation type="journal article" date="2010" name="Genome Biol.">
        <title>Structure and dynamics of the pan-genome of Streptococcus pneumoniae and closely related species.</title>
        <authorList>
            <person name="Donati C."/>
            <person name="Hiller N.L."/>
            <person name="Tettelin H."/>
            <person name="Muzzi A."/>
            <person name="Croucher N.J."/>
            <person name="Angiuoli S.V."/>
            <person name="Oggioni M."/>
            <person name="Dunning Hotopp J.C."/>
            <person name="Hu F.Z."/>
            <person name="Riley D.R."/>
            <person name="Covacci A."/>
            <person name="Mitchell T.J."/>
            <person name="Bentley S.D."/>
            <person name="Kilian M."/>
            <person name="Ehrlich G.D."/>
            <person name="Rappuoli R."/>
            <person name="Moxon E.R."/>
            <person name="Masignani V."/>
        </authorList>
    </citation>
    <scope>NUCLEOTIDE SEQUENCE [LARGE SCALE GENOMIC DNA]</scope>
    <source>
        <strain>P1031</strain>
    </source>
</reference>
<name>CODY_STRZP</name>